<gene>
    <name evidence="1" type="primary">psaA</name>
    <name type="ordered locus">Syncc9605_0331</name>
</gene>
<proteinExistence type="inferred from homology"/>
<reference key="1">
    <citation type="submission" date="2005-07" db="EMBL/GenBank/DDBJ databases">
        <title>Complete sequence of Synechococcus sp. CC9605.</title>
        <authorList>
            <consortium name="US DOE Joint Genome Institute"/>
            <person name="Copeland A."/>
            <person name="Lucas S."/>
            <person name="Lapidus A."/>
            <person name="Barry K."/>
            <person name="Detter J.C."/>
            <person name="Glavina T."/>
            <person name="Hammon N."/>
            <person name="Israni S."/>
            <person name="Pitluck S."/>
            <person name="Schmutz J."/>
            <person name="Martinez M."/>
            <person name="Larimer F."/>
            <person name="Land M."/>
            <person name="Kyrpides N."/>
            <person name="Ivanova N."/>
            <person name="Richardson P."/>
        </authorList>
    </citation>
    <scope>NUCLEOTIDE SEQUENCE [LARGE SCALE GENOMIC DNA]</scope>
    <source>
        <strain>CC9605</strain>
    </source>
</reference>
<organism>
    <name type="scientific">Synechococcus sp. (strain CC9605)</name>
    <dbReference type="NCBI Taxonomy" id="110662"/>
    <lineage>
        <taxon>Bacteria</taxon>
        <taxon>Bacillati</taxon>
        <taxon>Cyanobacteriota</taxon>
        <taxon>Cyanophyceae</taxon>
        <taxon>Synechococcales</taxon>
        <taxon>Synechococcaceae</taxon>
        <taxon>Synechococcus</taxon>
    </lineage>
</organism>
<name>PSAA_SYNSC</name>
<comment type="function">
    <text evidence="1">PsaA and PsaB bind P700, the primary electron donor of photosystem I (PSI), as well as the electron acceptors A0, A1 and FX. PSI is a plastocyanin/cytochrome c6-ferredoxin oxidoreductase, converting photonic excitation into a charge separation, which transfers an electron from the donor P700 chlorophyll pair to the spectroscopically characterized acceptors A0, A1, FX, FA and FB in turn. Oxidized P700 is reduced on the lumenal side of the thylakoid membrane by plastocyanin or cytochrome c6.</text>
</comment>
<comment type="catalytic activity">
    <reaction evidence="1">
        <text>reduced [plastocyanin] + hnu + oxidized [2Fe-2S]-[ferredoxin] = oxidized [plastocyanin] + reduced [2Fe-2S]-[ferredoxin]</text>
        <dbReference type="Rhea" id="RHEA:30407"/>
        <dbReference type="Rhea" id="RHEA-COMP:10000"/>
        <dbReference type="Rhea" id="RHEA-COMP:10001"/>
        <dbReference type="Rhea" id="RHEA-COMP:10039"/>
        <dbReference type="Rhea" id="RHEA-COMP:10040"/>
        <dbReference type="ChEBI" id="CHEBI:29036"/>
        <dbReference type="ChEBI" id="CHEBI:30212"/>
        <dbReference type="ChEBI" id="CHEBI:33737"/>
        <dbReference type="ChEBI" id="CHEBI:33738"/>
        <dbReference type="ChEBI" id="CHEBI:49552"/>
        <dbReference type="EC" id="1.97.1.12"/>
    </reaction>
</comment>
<comment type="cofactor">
    <text evidence="1">PSI electron transfer chain: 5 chlorophyll a, 1 chlorophyll a', 2 phylloquinones and 3 4Fe-4S clusters. PSI core antenna: 90 chlorophyll a, 22 carotenoids, 3 phospholipids and 1 galactolipid. P700 is a chlorophyll a/chlorophyll a' dimer, A0 is one or more chlorophyll a, A1 is one or both phylloquinones and FX is a shared 4Fe-4S iron-sulfur center.</text>
</comment>
<comment type="subunit">
    <text evidence="1">The PsaA/B heterodimer binds the P700 chlorophyll special pair and subsequent electron acceptors. PSI consists of a core antenna complex that captures photons, and an electron transfer chain that converts photonic excitation into a charge separation. The cyanobacterial PSI reaction center is composed of one copy each of PsaA,B,C,D,E,F,I,J,K,L,M and X, and forms trimeric complexes.</text>
</comment>
<comment type="subcellular location">
    <subcellularLocation>
        <location evidence="1">Cellular thylakoid membrane</location>
        <topology evidence="1">Multi-pass membrane protein</topology>
    </subcellularLocation>
</comment>
<comment type="similarity">
    <text evidence="1">Belongs to the PsaA/PsaB family.</text>
</comment>
<feature type="chain" id="PRO_0000294207" description="Photosystem I P700 chlorophyll a apoprotein A1">
    <location>
        <begin position="1"/>
        <end position="767"/>
    </location>
</feature>
<feature type="transmembrane region" description="Helical; Name=I" evidence="1">
    <location>
        <begin position="72"/>
        <end position="95"/>
    </location>
</feature>
<feature type="transmembrane region" description="Helical; Name=II" evidence="1">
    <location>
        <begin position="158"/>
        <end position="181"/>
    </location>
</feature>
<feature type="transmembrane region" description="Helical; Name=III" evidence="1">
    <location>
        <begin position="197"/>
        <end position="221"/>
    </location>
</feature>
<feature type="transmembrane region" description="Helical; Name=IV" evidence="1">
    <location>
        <begin position="305"/>
        <end position="323"/>
    </location>
</feature>
<feature type="transmembrane region" description="Helical; Name=V" evidence="1">
    <location>
        <begin position="364"/>
        <end position="387"/>
    </location>
</feature>
<feature type="transmembrane region" description="Helical; Name=VI" evidence="1">
    <location>
        <begin position="403"/>
        <end position="429"/>
    </location>
</feature>
<feature type="transmembrane region" description="Helical; Name=VII" evidence="1">
    <location>
        <begin position="451"/>
        <end position="473"/>
    </location>
</feature>
<feature type="transmembrane region" description="Helical; Name=VIII" evidence="1">
    <location>
        <begin position="548"/>
        <end position="566"/>
    </location>
</feature>
<feature type="transmembrane region" description="Helical; Name=IX" evidence="1">
    <location>
        <begin position="606"/>
        <end position="627"/>
    </location>
</feature>
<feature type="transmembrane region" description="Helical; Name=X" evidence="1">
    <location>
        <begin position="681"/>
        <end position="703"/>
    </location>
</feature>
<feature type="transmembrane region" description="Helical; Name=XI" evidence="1">
    <location>
        <begin position="741"/>
        <end position="761"/>
    </location>
</feature>
<feature type="binding site" evidence="1">
    <location>
        <position position="590"/>
    </location>
    <ligand>
        <name>[4Fe-4S] cluster</name>
        <dbReference type="ChEBI" id="CHEBI:49883"/>
        <note>ligand shared between dimeric partners</note>
    </ligand>
</feature>
<feature type="binding site" evidence="1">
    <location>
        <position position="599"/>
    </location>
    <ligand>
        <name>[4Fe-4S] cluster</name>
        <dbReference type="ChEBI" id="CHEBI:49883"/>
        <note>ligand shared between dimeric partners</note>
    </ligand>
</feature>
<feature type="binding site" description="axial binding residue" evidence="1">
    <location>
        <position position="692"/>
    </location>
    <ligand>
        <name>chlorophyll a'</name>
        <dbReference type="ChEBI" id="CHEBI:189419"/>
        <label>A1</label>
    </ligand>
    <ligandPart>
        <name>Mg</name>
        <dbReference type="ChEBI" id="CHEBI:25107"/>
    </ligandPart>
</feature>
<feature type="binding site" description="axial binding residue" evidence="1">
    <location>
        <position position="700"/>
    </location>
    <ligand>
        <name>chlorophyll a</name>
        <dbReference type="ChEBI" id="CHEBI:58416"/>
        <label>A3</label>
    </ligand>
    <ligandPart>
        <name>Mg</name>
        <dbReference type="ChEBI" id="CHEBI:25107"/>
    </ligandPart>
</feature>
<feature type="binding site" evidence="1">
    <location>
        <position position="708"/>
    </location>
    <ligand>
        <name>chlorophyll a</name>
        <dbReference type="ChEBI" id="CHEBI:58416"/>
        <label>A3</label>
    </ligand>
</feature>
<feature type="binding site" evidence="1">
    <location>
        <position position="709"/>
    </location>
    <ligand>
        <name>phylloquinone</name>
        <dbReference type="ChEBI" id="CHEBI:18067"/>
        <label>A</label>
    </ligand>
</feature>
<protein>
    <recommendedName>
        <fullName evidence="1">Photosystem I P700 chlorophyll a apoprotein A1</fullName>
        <ecNumber evidence="1">1.97.1.12</ecNumber>
    </recommendedName>
    <alternativeName>
        <fullName evidence="1">PsaA</fullName>
    </alternativeName>
</protein>
<sequence>MTISPPERGSDAKSQVEKVDNPATFELFGKPGHFDRALAKGPKTTTWVWNLHANAHDFDAHTSDLQEVSRRIFSAHFGHLAVIFIWLSGAFFHGARFSNYSGWLADPTHVKPSAQQVWAVFGQEVLNGDMGAGFQGIQITSGLFQMWRAWGITSETQLMALAIGALVMAGLMLNAGVFHYHKAAPKLEWFQNVESMLNHHLAGLLGLGSLSWAGHVIHVSAPVTKLMDAIDAGQPLVLNGKTIASAADIPLPHEFFNQDLLAQLYPGFSAGVGAFFSGNWAAYSDFLTFKGGLNPVTGSLWMTDIAHHHVAIAVMFIVAGHMYRTNWGIGHSIKEIHEGQKGDPLLFPATNGHDGLYDFMTNSWHAQLAVNLAIGGSVSIIVAQHMYAMPPYPYQAIDYPTQIGLFTHHIWIGGFLIVGAGAHAAIAMVRDYDPAKHIDNVLDRVLKARDAIISHLNWVCIWLGAHSFGLYIHNDTMRALGRPQDMFSDSAISIQPIFAQWIQNVHAAAAGSTAPNALAGVSEVFNGSVVAVGGKVAAAPMPLGTADFMVHHIHAFTIHVTVLILLKGVLYARSSRLIPDKANLGFRFSCDGPGRGGTCQVSAWDHVFLGLFWMYNSLSIVIFHFSWKMQSDIWGTVNADGSVAHITNGNFAQSAITINGWLRDYLWAQAVQVINSYGSNTAAYGIMFLGAHFVFAFSLMFLFSGRGYWQELIESIVWAHNKLKVAPAIQPRALSIIQGRAVGVAHYLLGGIATTWAFFHAHILVVG</sequence>
<dbReference type="EC" id="1.97.1.12" evidence="1"/>
<dbReference type="EMBL" id="CP000110">
    <property type="protein sequence ID" value="ABB34107.1"/>
    <property type="molecule type" value="Genomic_DNA"/>
</dbReference>
<dbReference type="RefSeq" id="WP_011363355.1">
    <property type="nucleotide sequence ID" value="NC_007516.1"/>
</dbReference>
<dbReference type="SMR" id="Q3AMS5"/>
<dbReference type="STRING" id="110662.Syncc9605_0331"/>
<dbReference type="KEGG" id="syd:Syncc9605_0331"/>
<dbReference type="eggNOG" id="COG2885">
    <property type="taxonomic scope" value="Bacteria"/>
</dbReference>
<dbReference type="HOGENOM" id="CLU_016126_1_0_3"/>
<dbReference type="OrthoDB" id="499313at2"/>
<dbReference type="GO" id="GO:0009522">
    <property type="term" value="C:photosystem I"/>
    <property type="evidence" value="ECO:0007669"/>
    <property type="project" value="UniProtKB-KW"/>
</dbReference>
<dbReference type="GO" id="GO:0031676">
    <property type="term" value="C:plasma membrane-derived thylakoid membrane"/>
    <property type="evidence" value="ECO:0007669"/>
    <property type="project" value="UniProtKB-SubCell"/>
</dbReference>
<dbReference type="GO" id="GO:0051539">
    <property type="term" value="F:4 iron, 4 sulfur cluster binding"/>
    <property type="evidence" value="ECO:0007669"/>
    <property type="project" value="UniProtKB-KW"/>
</dbReference>
<dbReference type="GO" id="GO:0016168">
    <property type="term" value="F:chlorophyll binding"/>
    <property type="evidence" value="ECO:0007669"/>
    <property type="project" value="UniProtKB-KW"/>
</dbReference>
<dbReference type="GO" id="GO:0009055">
    <property type="term" value="F:electron transfer activity"/>
    <property type="evidence" value="ECO:0007669"/>
    <property type="project" value="UniProtKB-UniRule"/>
</dbReference>
<dbReference type="GO" id="GO:0000287">
    <property type="term" value="F:magnesium ion binding"/>
    <property type="evidence" value="ECO:0007669"/>
    <property type="project" value="UniProtKB-UniRule"/>
</dbReference>
<dbReference type="GO" id="GO:0016491">
    <property type="term" value="F:oxidoreductase activity"/>
    <property type="evidence" value="ECO:0007669"/>
    <property type="project" value="UniProtKB-KW"/>
</dbReference>
<dbReference type="GO" id="GO:0015979">
    <property type="term" value="P:photosynthesis"/>
    <property type="evidence" value="ECO:0007669"/>
    <property type="project" value="UniProtKB-UniRule"/>
</dbReference>
<dbReference type="Gene3D" id="1.20.1130.10">
    <property type="entry name" value="Photosystem I PsaA/PsaB"/>
    <property type="match status" value="1"/>
</dbReference>
<dbReference type="HAMAP" id="MF_00458">
    <property type="entry name" value="PSI_PsaA"/>
    <property type="match status" value="1"/>
</dbReference>
<dbReference type="InterPro" id="IPR006243">
    <property type="entry name" value="PSI_PsaA"/>
</dbReference>
<dbReference type="InterPro" id="IPR001280">
    <property type="entry name" value="PSI_PsaA/B"/>
</dbReference>
<dbReference type="InterPro" id="IPR020586">
    <property type="entry name" value="PSI_PsaA/B_CS"/>
</dbReference>
<dbReference type="InterPro" id="IPR036408">
    <property type="entry name" value="PSI_PsaA/B_sf"/>
</dbReference>
<dbReference type="NCBIfam" id="TIGR01335">
    <property type="entry name" value="psaA"/>
    <property type="match status" value="1"/>
</dbReference>
<dbReference type="PANTHER" id="PTHR30128">
    <property type="entry name" value="OUTER MEMBRANE PROTEIN, OMPA-RELATED"/>
    <property type="match status" value="1"/>
</dbReference>
<dbReference type="PANTHER" id="PTHR30128:SF19">
    <property type="entry name" value="PHOTOSYSTEM I P700 CHLOROPHYLL A APOPROTEIN A1-RELATED"/>
    <property type="match status" value="1"/>
</dbReference>
<dbReference type="Pfam" id="PF00223">
    <property type="entry name" value="PsaA_PsaB"/>
    <property type="match status" value="1"/>
</dbReference>
<dbReference type="PIRSF" id="PIRSF002905">
    <property type="entry name" value="PSI_A"/>
    <property type="match status" value="1"/>
</dbReference>
<dbReference type="PRINTS" id="PR00257">
    <property type="entry name" value="PHOTSYSPSAAB"/>
</dbReference>
<dbReference type="SUPFAM" id="SSF81558">
    <property type="entry name" value="Photosystem I subunits PsaA/PsaB"/>
    <property type="match status" value="1"/>
</dbReference>
<dbReference type="PROSITE" id="PS00419">
    <property type="entry name" value="PHOTOSYSTEM_I_PSAAB"/>
    <property type="match status" value="1"/>
</dbReference>
<evidence type="ECO:0000255" key="1">
    <source>
        <dbReference type="HAMAP-Rule" id="MF_00458"/>
    </source>
</evidence>
<accession>Q3AMS5</accession>
<keyword id="KW-0004">4Fe-4S</keyword>
<keyword id="KW-0148">Chlorophyll</keyword>
<keyword id="KW-0157">Chromophore</keyword>
<keyword id="KW-0249">Electron transport</keyword>
<keyword id="KW-0408">Iron</keyword>
<keyword id="KW-0411">Iron-sulfur</keyword>
<keyword id="KW-0460">Magnesium</keyword>
<keyword id="KW-0472">Membrane</keyword>
<keyword id="KW-0479">Metal-binding</keyword>
<keyword id="KW-0560">Oxidoreductase</keyword>
<keyword id="KW-0602">Photosynthesis</keyword>
<keyword id="KW-0603">Photosystem I</keyword>
<keyword id="KW-0793">Thylakoid</keyword>
<keyword id="KW-0812">Transmembrane</keyword>
<keyword id="KW-1133">Transmembrane helix</keyword>
<keyword id="KW-0813">Transport</keyword>